<evidence type="ECO:0000256" key="1">
    <source>
        <dbReference type="SAM" id="MobiDB-lite"/>
    </source>
</evidence>
<evidence type="ECO:0000305" key="2"/>
<feature type="chain" id="PRO_0000402410" description="Capsid protein">
    <location>
        <begin position="1"/>
        <end position="182"/>
    </location>
</feature>
<feature type="region of interest" description="Disordered" evidence="1">
    <location>
        <begin position="1"/>
        <end position="25"/>
    </location>
</feature>
<proteinExistence type="predicted"/>
<dbReference type="EMBL" id="X76993">
    <property type="protein sequence ID" value="CAA54298.1"/>
    <property type="molecule type" value="Genomic_RNA"/>
</dbReference>
<dbReference type="RefSeq" id="NP_620039.1">
    <property type="nucleotide sequence ID" value="NC_003671.1"/>
</dbReference>
<dbReference type="KEGG" id="vg:991140"/>
<dbReference type="Proteomes" id="UP000000412">
    <property type="component" value="Genome"/>
</dbReference>
<dbReference type="GO" id="GO:1990904">
    <property type="term" value="C:ribonucleoprotein complex"/>
    <property type="evidence" value="ECO:0007669"/>
    <property type="project" value="UniProtKB-KW"/>
</dbReference>
<dbReference type="GO" id="GO:0039617">
    <property type="term" value="C:T=3 icosahedral viral capsid"/>
    <property type="evidence" value="ECO:0007669"/>
    <property type="project" value="UniProtKB-KW"/>
</dbReference>
<dbReference type="GO" id="GO:0019013">
    <property type="term" value="C:viral nucleocapsid"/>
    <property type="evidence" value="ECO:0007669"/>
    <property type="project" value="UniProtKB-KW"/>
</dbReference>
<dbReference type="GO" id="GO:0003723">
    <property type="term" value="F:RNA binding"/>
    <property type="evidence" value="ECO:0007669"/>
    <property type="project" value="UniProtKB-KW"/>
</dbReference>
<comment type="function">
    <text evidence="2">Capsid protein self-assembles to form a quasi-spherical capsid, about 26 nm, or bacilliform.</text>
</comment>
<comment type="subcellular location">
    <subcellularLocation>
        <location evidence="2">Virion</location>
    </subcellularLocation>
</comment>
<accession>Q9YNE2</accession>
<organism>
    <name type="scientific">Olive latent virus 2 (isolate Italy)</name>
    <name type="common">OLV-2</name>
    <dbReference type="NCBI Taxonomy" id="650489"/>
    <lineage>
        <taxon>Viruses</taxon>
        <taxon>Riboviria</taxon>
        <taxon>Orthornavirae</taxon>
        <taxon>Kitrinoviricota</taxon>
        <taxon>Alsuviricetes</taxon>
        <taxon>Martellivirales</taxon>
        <taxon>Bromoviridae</taxon>
        <taxon>Oleavirus</taxon>
        <taxon>Olive latent virus 2</taxon>
    </lineage>
</organism>
<gene>
    <name type="ORF">ORF3b</name>
</gene>
<organismHost>
    <name type="scientific">Olea</name>
    <dbReference type="NCBI Taxonomy" id="4145"/>
</organismHost>
<protein>
    <recommendedName>
        <fullName>Capsid protein</fullName>
        <shortName>CP</shortName>
    </recommendedName>
    <alternativeName>
        <fullName>Coat protein</fullName>
    </alternativeName>
</protein>
<sequence>MSSAAQPMSRRARRRAARRALGSQPGTSGGMVIPVSFVVSGATSADFVTYHSLYSRLAAYNGDLWIRRVAVRVTGSVAKRMGKYAFFEGLAVDKSQILSAAHARPYVYGLPSTLSLPGGRRQVKDFQSINLFFLLDGTAHAGEFAAGTFYFEFEGSPNVDFPRDSEGSNQAVEKFYLEHINA</sequence>
<keyword id="KW-0167">Capsid protein</keyword>
<keyword id="KW-1185">Reference proteome</keyword>
<keyword id="KW-0687">Ribonucleoprotein</keyword>
<keyword id="KW-0694">RNA-binding</keyword>
<keyword id="KW-1142">T=3 icosahedral capsid protein</keyword>
<keyword id="KW-0543">Viral nucleoprotein</keyword>
<keyword id="KW-0946">Virion</keyword>
<name>CAPSD_OLV2I</name>
<reference key="1">
    <citation type="journal article" date="1995" name="J. Gen. Virol.">
        <title>The nucleotide sequence of RNA3 and RNA4 of olive latent virus 2.</title>
        <authorList>
            <person name="Grieco F."/>
            <person name="Martelli G.P."/>
            <person name="Savino V."/>
        </authorList>
    </citation>
    <scope>NUCLEOTIDE SEQUENCE [GENOMIC RNA]</scope>
</reference>
<reference key="2">
    <citation type="submission" date="1999-02" db="EMBL/GenBank/DDBJ databases">
        <authorList>
            <person name="Grieco F."/>
        </authorList>
    </citation>
    <scope>SEQUENCE REVISION</scope>
</reference>